<name>SECA_SACEN</name>
<comment type="function">
    <text evidence="1">Part of the Sec protein translocase complex. Interacts with the SecYEG preprotein conducting channel. Has a central role in coupling the hydrolysis of ATP to the transfer of proteins into and across the cell membrane, serving as an ATP-driven molecular motor driving the stepwise translocation of polypeptide chains across the membrane.</text>
</comment>
<comment type="catalytic activity">
    <reaction evidence="1">
        <text>ATP + H2O + cellular proteinSide 1 = ADP + phosphate + cellular proteinSide 2.</text>
        <dbReference type="EC" id="7.4.2.8"/>
    </reaction>
</comment>
<comment type="subunit">
    <text evidence="1">Monomer and homodimer. Part of the essential Sec protein translocation apparatus which comprises SecA, SecYEG and auxiliary proteins SecDF. Other proteins may also be involved.</text>
</comment>
<comment type="subcellular location">
    <subcellularLocation>
        <location evidence="1">Cell membrane</location>
        <topology evidence="1">Peripheral membrane protein</topology>
        <orientation evidence="1">Cytoplasmic side</orientation>
    </subcellularLocation>
    <subcellularLocation>
        <location evidence="1">Cytoplasm</location>
    </subcellularLocation>
    <text evidence="1">Distribution is 50-50.</text>
</comment>
<comment type="similarity">
    <text evidence="1">Belongs to the SecA family.</text>
</comment>
<organism>
    <name type="scientific">Saccharopolyspora erythraea (strain ATCC 11635 / DSM 40517 / JCM 4748 / NBRC 13426 / NCIMB 8594 / NRRL 2338)</name>
    <dbReference type="NCBI Taxonomy" id="405948"/>
    <lineage>
        <taxon>Bacteria</taxon>
        <taxon>Bacillati</taxon>
        <taxon>Actinomycetota</taxon>
        <taxon>Actinomycetes</taxon>
        <taxon>Pseudonocardiales</taxon>
        <taxon>Pseudonocardiaceae</taxon>
        <taxon>Saccharopolyspora</taxon>
    </lineage>
</organism>
<accession>A4FNI7</accession>
<sequence length="953" mass="106692">MVLSRLLRAGEGKLLKRLRRIAAHINELEDDVLALSDAELRAKTDEFKRRHTDGESLDELLPEAFAVAREGARRTLGQRHFDVQLMGGAALHLGQIAEMKTGEGKTLTCVLPAYLNAIAGRGVHVVTVNDYLAKRDADWMGRVHRFLGLEVGAIMADMTPEQRRHAYAADITYGTNNEFGFDYLRDNMAWSLADCVQRGHFFSIVDEVDSILIDEARTPLIISGPADQSSRWYQEFARLAPMLKKDQHYEVDERKRTVGVTEDGVTIIEDQLGIENLYEAANTPLVGYLNNALKAKELYKRDKDYIVRNGEVVIVDEFTGRILHGRRYNEGMHQAIEAKEGVEIKAENQTLATITLQNYFRLYEKLAGMTGTAETEAAEFNGTYKLGVVPIPTNRPMARADQPDLVYKSEVAKFEAVAEDIEEKHRKGQPVLVGTTSVERSEYLAKLLVKKGVPHNVLNAKYHQSEAAIIAEAGRKGAVTVATNMAGRGTDIVLGGNVDHLADAELRKRGLDPVDNREEYEAQWPAVVEKIKEQVEAEAEEVRELGGLYVLGTERHESRRIDNQLRGRSGRQGDPGESRFYLSLGDELMRRFNAAMVETVMTRLKVPDDVPIEHKMVTRAIRSAQTQVEQQNMEIRKNVLKYDEVMNQQRSVIYDERRRVLEGEDLQEQVRHMIRDVVTEYVNAATADGYAEDWDFEKLWSALKTLYPVSVSWEALVDSDEDLSKERLLEEVLADAEAAYAKREAEVDGKVGPGAMRELERRVVLSVLDRKWREHLYEMDYLKEGIGLRAMAQRDPLVEYRREGFDMFHAMLDALKEESVGFLFNVQVEAAEPEPAPEQPSVPVSVSRSAEPTPDLQAAAEAAAAQSQVRRAKPTSAGPALSQLPGSTTQAPSALRGKGLDAPEKQRLNYSGPTEQGGVQTTSESAGEQGNGTSTRRERRAAARAEAKKNKRR</sequence>
<keyword id="KW-0067">ATP-binding</keyword>
<keyword id="KW-1003">Cell membrane</keyword>
<keyword id="KW-0963">Cytoplasm</keyword>
<keyword id="KW-0472">Membrane</keyword>
<keyword id="KW-0547">Nucleotide-binding</keyword>
<keyword id="KW-0653">Protein transport</keyword>
<keyword id="KW-1185">Reference proteome</keyword>
<keyword id="KW-1278">Translocase</keyword>
<keyword id="KW-0811">Translocation</keyword>
<keyword id="KW-0813">Transport</keyword>
<dbReference type="EC" id="7.4.2.8" evidence="1"/>
<dbReference type="EMBL" id="AM420293">
    <property type="protein sequence ID" value="CAM05612.1"/>
    <property type="molecule type" value="Genomic_DNA"/>
</dbReference>
<dbReference type="RefSeq" id="WP_009950960.1">
    <property type="nucleotide sequence ID" value="NC_009142.1"/>
</dbReference>
<dbReference type="SMR" id="A4FNI7"/>
<dbReference type="STRING" id="405948.SACE_6442"/>
<dbReference type="KEGG" id="sen:SACE_6442"/>
<dbReference type="eggNOG" id="COG0653">
    <property type="taxonomic scope" value="Bacteria"/>
</dbReference>
<dbReference type="HOGENOM" id="CLU_005314_3_0_11"/>
<dbReference type="OrthoDB" id="9805579at2"/>
<dbReference type="Proteomes" id="UP000006728">
    <property type="component" value="Chromosome"/>
</dbReference>
<dbReference type="GO" id="GO:0031522">
    <property type="term" value="C:cell envelope Sec protein transport complex"/>
    <property type="evidence" value="ECO:0007669"/>
    <property type="project" value="TreeGrafter"/>
</dbReference>
<dbReference type="GO" id="GO:0005829">
    <property type="term" value="C:cytosol"/>
    <property type="evidence" value="ECO:0007669"/>
    <property type="project" value="TreeGrafter"/>
</dbReference>
<dbReference type="GO" id="GO:0005886">
    <property type="term" value="C:plasma membrane"/>
    <property type="evidence" value="ECO:0007669"/>
    <property type="project" value="UniProtKB-SubCell"/>
</dbReference>
<dbReference type="GO" id="GO:0005524">
    <property type="term" value="F:ATP binding"/>
    <property type="evidence" value="ECO:0007669"/>
    <property type="project" value="UniProtKB-UniRule"/>
</dbReference>
<dbReference type="GO" id="GO:0008564">
    <property type="term" value="F:protein-exporting ATPase activity"/>
    <property type="evidence" value="ECO:0007669"/>
    <property type="project" value="UniProtKB-EC"/>
</dbReference>
<dbReference type="GO" id="GO:0065002">
    <property type="term" value="P:intracellular protein transmembrane transport"/>
    <property type="evidence" value="ECO:0007669"/>
    <property type="project" value="UniProtKB-UniRule"/>
</dbReference>
<dbReference type="GO" id="GO:0017038">
    <property type="term" value="P:protein import"/>
    <property type="evidence" value="ECO:0007669"/>
    <property type="project" value="InterPro"/>
</dbReference>
<dbReference type="GO" id="GO:0006605">
    <property type="term" value="P:protein targeting"/>
    <property type="evidence" value="ECO:0007669"/>
    <property type="project" value="UniProtKB-UniRule"/>
</dbReference>
<dbReference type="GO" id="GO:0043952">
    <property type="term" value="P:protein transport by the Sec complex"/>
    <property type="evidence" value="ECO:0007669"/>
    <property type="project" value="TreeGrafter"/>
</dbReference>
<dbReference type="CDD" id="cd17928">
    <property type="entry name" value="DEXDc_SecA"/>
    <property type="match status" value="1"/>
</dbReference>
<dbReference type="CDD" id="cd18803">
    <property type="entry name" value="SF2_C_secA"/>
    <property type="match status" value="1"/>
</dbReference>
<dbReference type="FunFam" id="1.10.3060.10:FF:000002">
    <property type="entry name" value="Preprotein translocase subunit SecA"/>
    <property type="match status" value="1"/>
</dbReference>
<dbReference type="FunFam" id="3.40.50.300:FF:000113">
    <property type="entry name" value="Preprotein translocase subunit SecA"/>
    <property type="match status" value="1"/>
</dbReference>
<dbReference type="FunFam" id="3.40.50.300:FF:000334">
    <property type="entry name" value="Protein translocase subunit SecA"/>
    <property type="match status" value="1"/>
</dbReference>
<dbReference type="FunFam" id="3.90.1440.10:FF:000002">
    <property type="entry name" value="Protein translocase subunit SecA"/>
    <property type="match status" value="1"/>
</dbReference>
<dbReference type="Gene3D" id="1.10.3060.10">
    <property type="entry name" value="Helical scaffold and wing domains of SecA"/>
    <property type="match status" value="1"/>
</dbReference>
<dbReference type="Gene3D" id="3.40.50.300">
    <property type="entry name" value="P-loop containing nucleotide triphosphate hydrolases"/>
    <property type="match status" value="2"/>
</dbReference>
<dbReference type="Gene3D" id="3.90.1440.10">
    <property type="entry name" value="SecA, preprotein cross-linking domain"/>
    <property type="match status" value="1"/>
</dbReference>
<dbReference type="HAMAP" id="MF_01382">
    <property type="entry name" value="SecA"/>
    <property type="match status" value="1"/>
</dbReference>
<dbReference type="InterPro" id="IPR014001">
    <property type="entry name" value="Helicase_ATP-bd"/>
</dbReference>
<dbReference type="InterPro" id="IPR001650">
    <property type="entry name" value="Helicase_C-like"/>
</dbReference>
<dbReference type="InterPro" id="IPR027417">
    <property type="entry name" value="P-loop_NTPase"/>
</dbReference>
<dbReference type="InterPro" id="IPR000185">
    <property type="entry name" value="SecA"/>
</dbReference>
<dbReference type="InterPro" id="IPR020937">
    <property type="entry name" value="SecA_CS"/>
</dbReference>
<dbReference type="InterPro" id="IPR011115">
    <property type="entry name" value="SecA_DEAD"/>
</dbReference>
<dbReference type="InterPro" id="IPR014018">
    <property type="entry name" value="SecA_motor_DEAD"/>
</dbReference>
<dbReference type="InterPro" id="IPR011130">
    <property type="entry name" value="SecA_preprotein_X-link_dom"/>
</dbReference>
<dbReference type="InterPro" id="IPR044722">
    <property type="entry name" value="SecA_SF2_C"/>
</dbReference>
<dbReference type="InterPro" id="IPR011116">
    <property type="entry name" value="SecA_Wing/Scaffold"/>
</dbReference>
<dbReference type="InterPro" id="IPR036266">
    <property type="entry name" value="SecA_Wing/Scaffold_sf"/>
</dbReference>
<dbReference type="InterPro" id="IPR036670">
    <property type="entry name" value="SecA_X-link_sf"/>
</dbReference>
<dbReference type="NCBIfam" id="NF009538">
    <property type="entry name" value="PRK12904.1"/>
    <property type="match status" value="1"/>
</dbReference>
<dbReference type="NCBIfam" id="TIGR00963">
    <property type="entry name" value="secA"/>
    <property type="match status" value="1"/>
</dbReference>
<dbReference type="PANTHER" id="PTHR30612:SF0">
    <property type="entry name" value="CHLOROPLAST PROTEIN-TRANSPORTING ATPASE"/>
    <property type="match status" value="1"/>
</dbReference>
<dbReference type="PANTHER" id="PTHR30612">
    <property type="entry name" value="SECA INNER MEMBRANE COMPONENT OF SEC PROTEIN SECRETION SYSTEM"/>
    <property type="match status" value="1"/>
</dbReference>
<dbReference type="Pfam" id="PF21090">
    <property type="entry name" value="P-loop_SecA"/>
    <property type="match status" value="1"/>
</dbReference>
<dbReference type="Pfam" id="PF07517">
    <property type="entry name" value="SecA_DEAD"/>
    <property type="match status" value="1"/>
</dbReference>
<dbReference type="Pfam" id="PF01043">
    <property type="entry name" value="SecA_PP_bind"/>
    <property type="match status" value="1"/>
</dbReference>
<dbReference type="Pfam" id="PF07516">
    <property type="entry name" value="SecA_SW"/>
    <property type="match status" value="1"/>
</dbReference>
<dbReference type="PRINTS" id="PR00906">
    <property type="entry name" value="SECA"/>
</dbReference>
<dbReference type="SMART" id="SM00957">
    <property type="entry name" value="SecA_DEAD"/>
    <property type="match status" value="1"/>
</dbReference>
<dbReference type="SMART" id="SM00958">
    <property type="entry name" value="SecA_PP_bind"/>
    <property type="match status" value="1"/>
</dbReference>
<dbReference type="SUPFAM" id="SSF81886">
    <property type="entry name" value="Helical scaffold and wing domains of SecA"/>
    <property type="match status" value="1"/>
</dbReference>
<dbReference type="SUPFAM" id="SSF52540">
    <property type="entry name" value="P-loop containing nucleoside triphosphate hydrolases"/>
    <property type="match status" value="2"/>
</dbReference>
<dbReference type="SUPFAM" id="SSF81767">
    <property type="entry name" value="Pre-protein crosslinking domain of SecA"/>
    <property type="match status" value="1"/>
</dbReference>
<dbReference type="PROSITE" id="PS01312">
    <property type="entry name" value="SECA"/>
    <property type="match status" value="1"/>
</dbReference>
<dbReference type="PROSITE" id="PS51196">
    <property type="entry name" value="SECA_MOTOR_DEAD"/>
    <property type="match status" value="1"/>
</dbReference>
<proteinExistence type="inferred from homology"/>
<reference key="1">
    <citation type="journal article" date="2007" name="Nat. Biotechnol.">
        <title>Complete genome sequence of the erythromycin-producing bacterium Saccharopolyspora erythraea NRRL23338.</title>
        <authorList>
            <person name="Oliynyk M."/>
            <person name="Samborskyy M."/>
            <person name="Lester J.B."/>
            <person name="Mironenko T."/>
            <person name="Scott N."/>
            <person name="Dickens S."/>
            <person name="Haydock S.F."/>
            <person name="Leadlay P.F."/>
        </authorList>
    </citation>
    <scope>NUCLEOTIDE SEQUENCE [LARGE SCALE GENOMIC DNA]</scope>
    <source>
        <strain>ATCC 11635 / DSM 40517 / JCM 4748 / NBRC 13426 / NCIMB 8594 / NRRL 2338</strain>
    </source>
</reference>
<gene>
    <name evidence="1" type="primary">secA</name>
    <name type="ordered locus">SACE_6442</name>
</gene>
<protein>
    <recommendedName>
        <fullName evidence="1">Protein translocase subunit SecA</fullName>
        <ecNumber evidence="1">7.4.2.8</ecNumber>
    </recommendedName>
</protein>
<evidence type="ECO:0000255" key="1">
    <source>
        <dbReference type="HAMAP-Rule" id="MF_01382"/>
    </source>
</evidence>
<evidence type="ECO:0000256" key="2">
    <source>
        <dbReference type="SAM" id="MobiDB-lite"/>
    </source>
</evidence>
<feature type="chain" id="PRO_0000318420" description="Protein translocase subunit SecA">
    <location>
        <begin position="1"/>
        <end position="953"/>
    </location>
</feature>
<feature type="region of interest" description="Disordered" evidence="2">
    <location>
        <begin position="832"/>
        <end position="953"/>
    </location>
</feature>
<feature type="compositionally biased region" description="Low complexity" evidence="2">
    <location>
        <begin position="841"/>
        <end position="865"/>
    </location>
</feature>
<feature type="compositionally biased region" description="Basic and acidic residues" evidence="2">
    <location>
        <begin position="898"/>
        <end position="907"/>
    </location>
</feature>
<feature type="compositionally biased region" description="Polar residues" evidence="2">
    <location>
        <begin position="908"/>
        <end position="934"/>
    </location>
</feature>
<feature type="compositionally biased region" description="Basic and acidic residues" evidence="2">
    <location>
        <begin position="940"/>
        <end position="953"/>
    </location>
</feature>
<feature type="binding site" evidence="1">
    <location>
        <position position="84"/>
    </location>
    <ligand>
        <name>ATP</name>
        <dbReference type="ChEBI" id="CHEBI:30616"/>
    </ligand>
</feature>
<feature type="binding site" evidence="1">
    <location>
        <begin position="102"/>
        <end position="106"/>
    </location>
    <ligand>
        <name>ATP</name>
        <dbReference type="ChEBI" id="CHEBI:30616"/>
    </ligand>
</feature>
<feature type="binding site" evidence="1">
    <location>
        <position position="491"/>
    </location>
    <ligand>
        <name>ATP</name>
        <dbReference type="ChEBI" id="CHEBI:30616"/>
    </ligand>
</feature>